<organism>
    <name type="scientific">Rattus norvegicus</name>
    <name type="common">Rat</name>
    <dbReference type="NCBI Taxonomy" id="10116"/>
    <lineage>
        <taxon>Eukaryota</taxon>
        <taxon>Metazoa</taxon>
        <taxon>Chordata</taxon>
        <taxon>Craniata</taxon>
        <taxon>Vertebrata</taxon>
        <taxon>Euteleostomi</taxon>
        <taxon>Mammalia</taxon>
        <taxon>Eutheria</taxon>
        <taxon>Euarchontoglires</taxon>
        <taxon>Glires</taxon>
        <taxon>Rodentia</taxon>
        <taxon>Myomorpha</taxon>
        <taxon>Muroidea</taxon>
        <taxon>Muridae</taxon>
        <taxon>Murinae</taxon>
        <taxon>Rattus</taxon>
    </lineage>
</organism>
<keyword id="KW-0963">Cytoplasm</keyword>
<keyword id="KW-0903">Direct protein sequencing</keyword>
<keyword id="KW-0520">NAD</keyword>
<keyword id="KW-0560">Oxidoreductase</keyword>
<keyword id="KW-1185">Reference proteome</keyword>
<sequence>MSTVKEQLIQNLAPDEKQSRCKITVVGVGNVGMACAISILLKGLADELALVDADENKLKGEALDLLHGSLFLSTPKIVFGKDYSVSANSKLVIITAGARMVSGESRLALLQRNVTSMKAIVPGVIQNSPDCKIMIVTNPVDILTYVVWKISGLPVSSVIGSGCNLDSARFRYLIGEKLGVNPSSCHGWVLGEHGDSSVPIWSGVNIAGVTLKSLNPAIGSDSDKEQWKTVHKQVVDGGYEVLNLKGYTSWAIALSVTDIAASILKNLKRVHAVTTLVKGLYGIKEEIFLSIPCVLGQSGITDLVKVNMNTEEEALFKKSCDILWNIQKDLQL</sequence>
<feature type="initiator methionine" description="Removed" evidence="2">
    <location>
        <position position="1"/>
    </location>
</feature>
<feature type="chain" id="PRO_0000168482" description="L-lactate dehydrogenase C chain">
    <location>
        <begin position="2"/>
        <end position="332"/>
    </location>
</feature>
<feature type="active site" description="Proton acceptor" evidence="1">
    <location>
        <position position="193"/>
    </location>
</feature>
<feature type="binding site" evidence="1">
    <location>
        <begin position="29"/>
        <end position="57"/>
    </location>
    <ligand>
        <name>NAD(+)</name>
        <dbReference type="ChEBI" id="CHEBI:57540"/>
    </ligand>
</feature>
<feature type="binding site" evidence="1">
    <location>
        <position position="99"/>
    </location>
    <ligand>
        <name>NAD(+)</name>
        <dbReference type="ChEBI" id="CHEBI:57540"/>
    </ligand>
</feature>
<feature type="binding site" evidence="1">
    <location>
        <position position="106"/>
    </location>
    <ligand>
        <name>substrate</name>
    </ligand>
</feature>
<feature type="binding site" evidence="1">
    <location>
        <position position="138"/>
    </location>
    <ligand>
        <name>NAD(+)</name>
        <dbReference type="ChEBI" id="CHEBI:57540"/>
    </ligand>
</feature>
<feature type="binding site" evidence="1">
    <location>
        <position position="138"/>
    </location>
    <ligand>
        <name>substrate</name>
    </ligand>
</feature>
<feature type="binding site" evidence="1">
    <location>
        <position position="169"/>
    </location>
    <ligand>
        <name>substrate</name>
    </ligand>
</feature>
<feature type="binding site" evidence="1">
    <location>
        <position position="248"/>
    </location>
    <ligand>
        <name>substrate</name>
    </ligand>
</feature>
<feature type="modified residue" description="Blocked amino end (Ser)">
    <location>
        <position position="2"/>
    </location>
</feature>
<feature type="sequence conflict" description="In Ref. 2; AA sequence." evidence="3" ref="2">
    <original>Q</original>
    <variation>E</variation>
    <location>
        <position position="7"/>
    </location>
</feature>
<feature type="sequence conflict" description="In Ref. 2; AA sequence." evidence="3" ref="2">
    <location>
        <position position="16"/>
    </location>
</feature>
<feature type="sequence conflict" description="In Ref. 2; AA sequence." evidence="3" ref="2">
    <original>N</original>
    <variation>D</variation>
    <location>
        <position position="30"/>
    </location>
</feature>
<feature type="sequence conflict" description="In Ref. 2; AA sequence." evidence="3" ref="2">
    <original>N</original>
    <variation>D</variation>
    <location>
        <position position="56"/>
    </location>
</feature>
<feature type="sequence conflict" description="In Ref. 2; AA sequence." evidence="3" ref="2">
    <original>E</original>
    <variation>Q</variation>
    <location>
        <position position="104"/>
    </location>
</feature>
<feature type="sequence conflict" description="In Ref. 2; AA sequence." evidence="3" ref="2">
    <original>S</original>
    <variation>I</variation>
    <location>
        <position position="116"/>
    </location>
</feature>
<feature type="sequence conflict" description="In Ref. 2; AA sequence." evidence="3" ref="2">
    <original>S</original>
    <variation>T</variation>
    <location>
        <position position="183"/>
    </location>
</feature>
<feature type="sequence conflict" description="In Ref. 2; AA sequence." evidence="3" ref="2">
    <original>I</original>
    <variation>V</variation>
    <location>
        <position position="200"/>
    </location>
</feature>
<feature type="sequence conflict" description="In Ref. 2; AA sequence." evidence="3" ref="2">
    <original>I</original>
    <variation>V</variation>
    <location>
        <position position="206"/>
    </location>
</feature>
<feature type="sequence conflict" description="In Ref. 2; AA sequence." evidence="3" ref="2">
    <original>DKEQ</original>
    <variation>NKQE</variation>
    <location>
        <begin position="223"/>
        <end position="226"/>
    </location>
</feature>
<feature type="sequence conflict" description="In Ref. 2; AA sequence." evidence="3" ref="2">
    <original>N</original>
    <variation>D</variation>
    <location>
        <position position="243"/>
    </location>
</feature>
<feature type="sequence conflict" description="In Ref. 2; AA sequence." evidence="3" ref="2">
    <original>A</original>
    <variation>G</variation>
    <location>
        <position position="253"/>
    </location>
</feature>
<feature type="sequence conflict" description="In Ref. 2; AA sequence." evidence="3" ref="2">
    <original>IAA</original>
    <variation>LAE</variation>
    <location>
        <begin position="259"/>
        <end position="261"/>
    </location>
</feature>
<feature type="sequence conflict" description="In Ref. 2; AA sequence." evidence="3" ref="2">
    <original>Q</original>
    <variation>E</variation>
    <location>
        <position position="297"/>
    </location>
</feature>
<feature type="sequence conflict" description="In Ref. 2; AA sequence." evidence="3" ref="2">
    <original>DLQ</original>
    <variation>NLE</variation>
    <location>
        <begin position="329"/>
        <end position="331"/>
    </location>
</feature>
<evidence type="ECO:0000250" key="1"/>
<evidence type="ECO:0000269" key="2">
    <source>
    </source>
</evidence>
<evidence type="ECO:0000305" key="3"/>
<accession>P19629</accession>
<protein>
    <recommendedName>
        <fullName>L-lactate dehydrogenase C chain</fullName>
        <shortName>LDH-C</shortName>
        <ecNumber>1.1.1.27</ecNumber>
    </recommendedName>
    <alternativeName>
        <fullName>LDH testis subunit</fullName>
    </alternativeName>
    <alternativeName>
        <fullName>LDH-X</fullName>
    </alternativeName>
</protein>
<comment type="function">
    <text evidence="1">Possible role in sperm motility.</text>
</comment>
<comment type="catalytic activity">
    <reaction>
        <text>(S)-lactate + NAD(+) = pyruvate + NADH + H(+)</text>
        <dbReference type="Rhea" id="RHEA:23444"/>
        <dbReference type="ChEBI" id="CHEBI:15361"/>
        <dbReference type="ChEBI" id="CHEBI:15378"/>
        <dbReference type="ChEBI" id="CHEBI:16651"/>
        <dbReference type="ChEBI" id="CHEBI:57540"/>
        <dbReference type="ChEBI" id="CHEBI:57945"/>
        <dbReference type="EC" id="1.1.1.27"/>
    </reaction>
</comment>
<comment type="pathway">
    <text>Fermentation; pyruvate fermentation to lactate; (S)-lactate from pyruvate: step 1/1.</text>
</comment>
<comment type="subunit">
    <text evidence="1">Homotetramer. Interacts with RABL2/RABL2A; binds preferentially to GTP-bound RABL2 (By similarity).</text>
</comment>
<comment type="subcellular location">
    <subcellularLocation>
        <location>Cytoplasm</location>
    </subcellularLocation>
</comment>
<comment type="similarity">
    <text evidence="3">Belongs to the LDH/MDH superfamily. LDH family.</text>
</comment>
<dbReference type="EC" id="1.1.1.27"/>
<dbReference type="EMBL" id="U07177">
    <property type="protein sequence ID" value="AAA50435.1"/>
    <property type="molecule type" value="mRNA"/>
</dbReference>
<dbReference type="PIR" id="I84639">
    <property type="entry name" value="I84639"/>
</dbReference>
<dbReference type="SMR" id="P19629"/>
<dbReference type="FunCoup" id="P19629">
    <property type="interactions" value="10"/>
</dbReference>
<dbReference type="STRING" id="10116.ENSRNOP00000017851"/>
<dbReference type="iPTMnet" id="P19629"/>
<dbReference type="PhosphoSitePlus" id="P19629"/>
<dbReference type="jPOST" id="P19629"/>
<dbReference type="PaxDb" id="10116-ENSRNOP00000017851"/>
<dbReference type="UCSC" id="RGD:69366">
    <property type="organism name" value="rat"/>
</dbReference>
<dbReference type="AGR" id="RGD:69366"/>
<dbReference type="RGD" id="69366">
    <property type="gene designation" value="Ldhc"/>
</dbReference>
<dbReference type="eggNOG" id="KOG1495">
    <property type="taxonomic scope" value="Eukaryota"/>
</dbReference>
<dbReference type="InParanoid" id="P19629"/>
<dbReference type="PhylomeDB" id="P19629"/>
<dbReference type="Reactome" id="R-RNO-70268">
    <property type="pathway name" value="Pyruvate metabolism"/>
</dbReference>
<dbReference type="UniPathway" id="UPA00554">
    <property type="reaction ID" value="UER00611"/>
</dbReference>
<dbReference type="PRO" id="PR:P19629"/>
<dbReference type="Proteomes" id="UP000002494">
    <property type="component" value="Unplaced"/>
</dbReference>
<dbReference type="GO" id="GO:0005929">
    <property type="term" value="C:cilium"/>
    <property type="evidence" value="ECO:0000266"/>
    <property type="project" value="RGD"/>
</dbReference>
<dbReference type="GO" id="GO:0005737">
    <property type="term" value="C:cytoplasm"/>
    <property type="evidence" value="ECO:0000266"/>
    <property type="project" value="RGD"/>
</dbReference>
<dbReference type="GO" id="GO:0005829">
    <property type="term" value="C:cytosol"/>
    <property type="evidence" value="ECO:0000266"/>
    <property type="project" value="RGD"/>
</dbReference>
<dbReference type="GO" id="GO:0005739">
    <property type="term" value="C:mitochondrion"/>
    <property type="evidence" value="ECO:0000318"/>
    <property type="project" value="GO_Central"/>
</dbReference>
<dbReference type="GO" id="GO:0031514">
    <property type="term" value="C:motile cilium"/>
    <property type="evidence" value="ECO:0000266"/>
    <property type="project" value="RGD"/>
</dbReference>
<dbReference type="GO" id="GO:0004459">
    <property type="term" value="F:L-lactate dehydrogenase activity"/>
    <property type="evidence" value="ECO:0000266"/>
    <property type="project" value="RGD"/>
</dbReference>
<dbReference type="GO" id="GO:0006754">
    <property type="term" value="P:ATP biosynthetic process"/>
    <property type="evidence" value="ECO:0000266"/>
    <property type="project" value="RGD"/>
</dbReference>
<dbReference type="GO" id="GO:0030317">
    <property type="term" value="P:flagellated sperm motility"/>
    <property type="evidence" value="ECO:0000266"/>
    <property type="project" value="RGD"/>
</dbReference>
<dbReference type="GO" id="GO:0019244">
    <property type="term" value="P:lactate biosynthetic process from pyruvate"/>
    <property type="evidence" value="ECO:0000266"/>
    <property type="project" value="RGD"/>
</dbReference>
<dbReference type="GO" id="GO:0006089">
    <property type="term" value="P:lactate metabolic process"/>
    <property type="evidence" value="ECO:0000266"/>
    <property type="project" value="RGD"/>
</dbReference>
<dbReference type="GO" id="GO:0042867">
    <property type="term" value="P:pyruvate catabolic process"/>
    <property type="evidence" value="ECO:0000266"/>
    <property type="project" value="RGD"/>
</dbReference>
<dbReference type="GO" id="GO:0006090">
    <property type="term" value="P:pyruvate metabolic process"/>
    <property type="evidence" value="ECO:0000266"/>
    <property type="project" value="RGD"/>
</dbReference>
<dbReference type="CDD" id="cd05293">
    <property type="entry name" value="LDH_1"/>
    <property type="match status" value="1"/>
</dbReference>
<dbReference type="FunFam" id="3.40.50.720:FF:000029">
    <property type="entry name" value="L-lactate dehydrogenase A chain"/>
    <property type="match status" value="1"/>
</dbReference>
<dbReference type="FunFam" id="3.90.110.10:FF:000003">
    <property type="entry name" value="L-lactate dehydrogenase A chain"/>
    <property type="match status" value="1"/>
</dbReference>
<dbReference type="Gene3D" id="3.90.110.10">
    <property type="entry name" value="Lactate dehydrogenase/glycoside hydrolase, family 4, C-terminal"/>
    <property type="match status" value="1"/>
</dbReference>
<dbReference type="Gene3D" id="3.40.50.720">
    <property type="entry name" value="NAD(P)-binding Rossmann-like Domain"/>
    <property type="match status" value="1"/>
</dbReference>
<dbReference type="HAMAP" id="MF_00488">
    <property type="entry name" value="Lactate_dehydrog"/>
    <property type="match status" value="1"/>
</dbReference>
<dbReference type="InterPro" id="IPR001557">
    <property type="entry name" value="L-lactate/malate_DH"/>
</dbReference>
<dbReference type="InterPro" id="IPR011304">
    <property type="entry name" value="L-lactate_DH"/>
</dbReference>
<dbReference type="InterPro" id="IPR018177">
    <property type="entry name" value="L-lactate_DH_AS"/>
</dbReference>
<dbReference type="InterPro" id="IPR022383">
    <property type="entry name" value="Lactate/malate_DH_C"/>
</dbReference>
<dbReference type="InterPro" id="IPR001236">
    <property type="entry name" value="Lactate/malate_DH_N"/>
</dbReference>
<dbReference type="InterPro" id="IPR015955">
    <property type="entry name" value="Lactate_DH/Glyco_Ohase_4_C"/>
</dbReference>
<dbReference type="InterPro" id="IPR036291">
    <property type="entry name" value="NAD(P)-bd_dom_sf"/>
</dbReference>
<dbReference type="NCBIfam" id="TIGR01771">
    <property type="entry name" value="L-LDH-NAD"/>
    <property type="match status" value="1"/>
</dbReference>
<dbReference type="PANTHER" id="PTHR43128">
    <property type="entry name" value="L-2-HYDROXYCARBOXYLATE DEHYDROGENASE (NAD(P)(+))"/>
    <property type="match status" value="1"/>
</dbReference>
<dbReference type="PANTHER" id="PTHR43128:SF5">
    <property type="entry name" value="L-LACTATE DEHYDROGENASE C CHAIN"/>
    <property type="match status" value="1"/>
</dbReference>
<dbReference type="Pfam" id="PF02866">
    <property type="entry name" value="Ldh_1_C"/>
    <property type="match status" value="1"/>
</dbReference>
<dbReference type="Pfam" id="PF00056">
    <property type="entry name" value="Ldh_1_N"/>
    <property type="match status" value="1"/>
</dbReference>
<dbReference type="PIRSF" id="PIRSF000102">
    <property type="entry name" value="Lac_mal_DH"/>
    <property type="match status" value="1"/>
</dbReference>
<dbReference type="PRINTS" id="PR00086">
    <property type="entry name" value="LLDHDRGNASE"/>
</dbReference>
<dbReference type="SUPFAM" id="SSF56327">
    <property type="entry name" value="LDH C-terminal domain-like"/>
    <property type="match status" value="1"/>
</dbReference>
<dbReference type="SUPFAM" id="SSF51735">
    <property type="entry name" value="NAD(P)-binding Rossmann-fold domains"/>
    <property type="match status" value="1"/>
</dbReference>
<dbReference type="PROSITE" id="PS00064">
    <property type="entry name" value="L_LDH"/>
    <property type="match status" value="1"/>
</dbReference>
<gene>
    <name type="primary">Ldhc</name>
    <name type="synonym">Ldh-3</name>
    <name type="synonym">Ldh3</name>
</gene>
<reference key="1">
    <citation type="journal article" date="1994" name="Proc. Natl. Acad. Sci. U.S.A.">
        <title>Evolutionary relationships of lactate dehydrogenases (LDHs) from mammals, birds, an amphibian, fish, barley, and bacteria: LDH cDNA sequences from Xenopus, pig, and rat.</title>
        <authorList>
            <person name="Tsuji S."/>
            <person name="Qureshi M.A."/>
            <person name="Hou E.W."/>
            <person name="Fitch W.M."/>
            <person name="Li S.S.-L."/>
        </authorList>
    </citation>
    <scope>NUCLEOTIDE SEQUENCE [MRNA]</scope>
    <source>
        <tissue>Testis</tissue>
    </source>
</reference>
<reference key="2">
    <citation type="journal article" date="1983" name="J. Biol. Chem.">
        <title>Amino acid sequence studies on lactate dehydrogenase C4 isozymes from mouse and rat testes.</title>
        <authorList>
            <person name="Pan Y.-C.E."/>
            <person name="Sharief F.S."/>
            <person name="Okabe M."/>
            <person name="Huang S."/>
            <person name="Li S.S.-L."/>
        </authorList>
    </citation>
    <scope>PROTEIN SEQUENCE OF 2-332</scope>
</reference>
<reference key="3">
    <citation type="journal article" date="2012" name="Nat. Commun.">
        <title>Quantitative maps of protein phosphorylation sites across 14 different rat organs and tissues.</title>
        <authorList>
            <person name="Lundby A."/>
            <person name="Secher A."/>
            <person name="Lage K."/>
            <person name="Nordsborg N.B."/>
            <person name="Dmytriyev A."/>
            <person name="Lundby C."/>
            <person name="Olsen J.V."/>
        </authorList>
    </citation>
    <scope>IDENTIFICATION BY MASS SPECTROMETRY [LARGE SCALE ANALYSIS]</scope>
</reference>
<proteinExistence type="evidence at protein level"/>
<name>LDHC_RAT</name>